<reference key="1">
    <citation type="journal article" date="2001" name="Nature">
        <title>Complete genome sequence of Salmonella enterica serovar Typhimurium LT2.</title>
        <authorList>
            <person name="McClelland M."/>
            <person name="Sanderson K.E."/>
            <person name="Spieth J."/>
            <person name="Clifton S.W."/>
            <person name="Latreille P."/>
            <person name="Courtney L."/>
            <person name="Porwollik S."/>
            <person name="Ali J."/>
            <person name="Dante M."/>
            <person name="Du F."/>
            <person name="Hou S."/>
            <person name="Layman D."/>
            <person name="Leonard S."/>
            <person name="Nguyen C."/>
            <person name="Scott K."/>
            <person name="Holmes A."/>
            <person name="Grewal N."/>
            <person name="Mulvaney E."/>
            <person name="Ryan E."/>
            <person name="Sun H."/>
            <person name="Florea L."/>
            <person name="Miller W."/>
            <person name="Stoneking T."/>
            <person name="Nhan M."/>
            <person name="Waterston R."/>
            <person name="Wilson R.K."/>
        </authorList>
    </citation>
    <scope>NUCLEOTIDE SEQUENCE [LARGE SCALE GENOMIC DNA]</scope>
    <source>
        <strain>LT2 / SGSC1412 / ATCC 700720</strain>
    </source>
</reference>
<reference key="2">
    <citation type="submission" date="1997-03" db="EMBL/GenBank/DDBJ databases">
        <authorList>
            <person name="Tsang A.W."/>
            <person name="Escalante-Semerena J.C."/>
        </authorList>
    </citation>
    <scope>NUCLEOTIDE SEQUENCE [GENOMIC DNA] OF 190-348</scope>
</reference>
<accession>P0A2C7</accession>
<accession>P97012</accession>
<protein>
    <recommendedName>
        <fullName>Spermidine/putrescine-binding periplasmic protein</fullName>
        <shortName>SPBP</shortName>
    </recommendedName>
</protein>
<name>POTD_SALTY</name>
<comment type="function">
    <text>Required for the activity of the bacterial periplasmic transport system of putrescine and spermidine. Polyamine binding protein.</text>
</comment>
<comment type="subcellular location">
    <subcellularLocation>
        <location>Periplasm</location>
    </subcellularLocation>
</comment>
<comment type="similarity">
    <text evidence="2">Belongs to the bacterial solute-binding protein PotD/PotF family.</text>
</comment>
<dbReference type="EMBL" id="AE006468">
    <property type="protein sequence ID" value="AAL20151.1"/>
    <property type="molecule type" value="Genomic_DNA"/>
</dbReference>
<dbReference type="EMBL" id="U89687">
    <property type="status" value="NOT_ANNOTATED_CDS"/>
    <property type="molecule type" value="Genomic_DNA"/>
</dbReference>
<dbReference type="RefSeq" id="NP_460192.1">
    <property type="nucleotide sequence ID" value="NC_003197.2"/>
</dbReference>
<dbReference type="RefSeq" id="WP_000759329.1">
    <property type="nucleotide sequence ID" value="NC_003197.2"/>
</dbReference>
<dbReference type="SMR" id="P0A2C7"/>
<dbReference type="STRING" id="99287.STM1222"/>
<dbReference type="PaxDb" id="99287-STM1222"/>
<dbReference type="GeneID" id="1252740"/>
<dbReference type="KEGG" id="stm:STM1222"/>
<dbReference type="PATRIC" id="fig|99287.12.peg.1291"/>
<dbReference type="HOGENOM" id="CLU_026974_1_3_6"/>
<dbReference type="OMA" id="FWMDNYA"/>
<dbReference type="PhylomeDB" id="P0A2C7"/>
<dbReference type="BioCyc" id="SENT99287:STM1222-MONOMER"/>
<dbReference type="Proteomes" id="UP000001014">
    <property type="component" value="Chromosome"/>
</dbReference>
<dbReference type="GO" id="GO:0030288">
    <property type="term" value="C:outer membrane-bounded periplasmic space"/>
    <property type="evidence" value="ECO:0007669"/>
    <property type="project" value="UniProtKB-ARBA"/>
</dbReference>
<dbReference type="GO" id="GO:0019808">
    <property type="term" value="F:polyamine binding"/>
    <property type="evidence" value="ECO:0007669"/>
    <property type="project" value="InterPro"/>
</dbReference>
<dbReference type="GO" id="GO:0015846">
    <property type="term" value="P:polyamine transport"/>
    <property type="evidence" value="ECO:0007669"/>
    <property type="project" value="InterPro"/>
</dbReference>
<dbReference type="CDD" id="cd13660">
    <property type="entry name" value="PBP2_PotD"/>
    <property type="match status" value="1"/>
</dbReference>
<dbReference type="FunFam" id="3.40.190.10:FF:000062">
    <property type="entry name" value="Putrescine-binding periplasmic protein"/>
    <property type="match status" value="1"/>
</dbReference>
<dbReference type="Gene3D" id="3.40.190.10">
    <property type="entry name" value="Periplasmic binding protein-like II"/>
    <property type="match status" value="2"/>
</dbReference>
<dbReference type="InterPro" id="IPR006059">
    <property type="entry name" value="SBP"/>
</dbReference>
<dbReference type="InterPro" id="IPR001188">
    <property type="entry name" value="Sperm_putr-bd"/>
</dbReference>
<dbReference type="NCBIfam" id="NF007048">
    <property type="entry name" value="PRK09501.1"/>
    <property type="match status" value="1"/>
</dbReference>
<dbReference type="PANTHER" id="PTHR30222">
    <property type="entry name" value="SPERMIDINE/PUTRESCINE-BINDING PERIPLASMIC PROTEIN"/>
    <property type="match status" value="1"/>
</dbReference>
<dbReference type="PANTHER" id="PTHR30222:SF17">
    <property type="entry name" value="SPERMIDINE_PUTRESCINE-BINDING PERIPLASMIC PROTEIN"/>
    <property type="match status" value="1"/>
</dbReference>
<dbReference type="Pfam" id="PF13416">
    <property type="entry name" value="SBP_bac_8"/>
    <property type="match status" value="1"/>
</dbReference>
<dbReference type="PIRSF" id="PIRSF019574">
    <property type="entry name" value="Periplasmic_polyamine_BP"/>
    <property type="match status" value="1"/>
</dbReference>
<dbReference type="PRINTS" id="PR00909">
    <property type="entry name" value="SPERMDNBNDNG"/>
</dbReference>
<dbReference type="SUPFAM" id="SSF53850">
    <property type="entry name" value="Periplasmic binding protein-like II"/>
    <property type="match status" value="1"/>
</dbReference>
<gene>
    <name type="primary">potD</name>
    <name type="ordered locus">STM1222</name>
</gene>
<sequence>MKKWSRHLLAAGALALGMSAAHASDNDTLYFYNWTEYVPPGLLEQFTKETGIKVIYSTYESNETMYAKLKTYKDGAYDLVVPSTYYVDKMRKEGMIQKIDKSKLTNFHNLDPEMLNKPFDPNNDYSVPYIWGATAIGVNSDAIDPKTITSWADLWKPEYKNSLLLTDDAREVFQMALRKLGYSGNTTDPKEIEAAYEELKKLMPNVAAFNSDNPANPYMEGEVNLGMVWNGSAFVARQAGTPLEVVWPKEGGIFWMDSLAIPANAKNKEGALKLINFLLRPDVAKEVAETIGYPTPNLAARKLLSPEVANDKSLYPDAQTISKGEWQNDVGDASAIYEEYYQKLKAGR</sequence>
<keyword id="KW-0574">Periplasm</keyword>
<keyword id="KW-1185">Reference proteome</keyword>
<keyword id="KW-0732">Signal</keyword>
<keyword id="KW-0813">Transport</keyword>
<proteinExistence type="inferred from homology"/>
<organism>
    <name type="scientific">Salmonella typhimurium (strain LT2 / SGSC1412 / ATCC 700720)</name>
    <dbReference type="NCBI Taxonomy" id="99287"/>
    <lineage>
        <taxon>Bacteria</taxon>
        <taxon>Pseudomonadati</taxon>
        <taxon>Pseudomonadota</taxon>
        <taxon>Gammaproteobacteria</taxon>
        <taxon>Enterobacterales</taxon>
        <taxon>Enterobacteriaceae</taxon>
        <taxon>Salmonella</taxon>
    </lineage>
</organism>
<feature type="signal peptide" evidence="1">
    <location>
        <begin position="1"/>
        <end position="23"/>
    </location>
</feature>
<feature type="chain" id="PRO_0000031839" description="Spermidine/putrescine-binding periplasmic protein">
    <location>
        <begin position="24"/>
        <end position="348"/>
    </location>
</feature>
<feature type="sequence conflict" description="In Ref. 2." evidence="2" ref="2">
    <original>E</original>
    <variation>N</variation>
    <location>
        <position position="197"/>
    </location>
</feature>
<feature type="sequence conflict" description="In Ref. 2." evidence="2" ref="2">
    <original>V</original>
    <variation>I</variation>
    <location>
        <position position="228"/>
    </location>
</feature>
<feature type="sequence conflict" description="In Ref. 2." evidence="2" ref="2">
    <original>LE</original>
    <variation>ID</variation>
    <location>
        <begin position="243"/>
        <end position="244"/>
    </location>
</feature>
<feature type="sequence conflict" description="In Ref. 2." evidence="2" ref="2">
    <original>IF</original>
    <variation>TP</variation>
    <location>
        <begin position="253"/>
        <end position="254"/>
    </location>
</feature>
<feature type="sequence conflict" description="In Ref. 2." evidence="2" ref="2">
    <original>I</original>
    <variation>R</variation>
    <location>
        <position position="261"/>
    </location>
</feature>
<feature type="sequence conflict" description="In Ref. 2." evidence="2" ref="2">
    <original>E</original>
    <variation>Q</variation>
    <location>
        <position position="286"/>
    </location>
</feature>
<feature type="sequence conflict" description="In Ref. 2." evidence="2" ref="2">
    <original>N</original>
    <variation>H</variation>
    <location>
        <position position="297"/>
    </location>
</feature>
<feature type="sequence conflict" description="In Ref. 2." evidence="2" ref="2">
    <original>S</original>
    <variation>T</variation>
    <location>
        <position position="313"/>
    </location>
</feature>
<feature type="sequence conflict" description="In Ref. 2." evidence="2" ref="2">
    <original>Q</original>
    <variation>E</variation>
    <location>
        <position position="319"/>
    </location>
</feature>
<feature type="sequence conflict" description="In Ref. 2." evidence="2" ref="2">
    <original>SK</original>
    <variation>KN</variation>
    <location>
        <begin position="322"/>
        <end position="323"/>
    </location>
</feature>
<feature type="sequence conflict" description="In Ref. 2." evidence="2" ref="2">
    <original>D</original>
    <variation>A</variation>
    <location>
        <position position="332"/>
    </location>
</feature>
<feature type="sequence conflict" description="In Ref. 2." evidence="2" ref="2">
    <original>A</original>
    <variation>S</variation>
    <location>
        <position position="335"/>
    </location>
</feature>
<evidence type="ECO:0000250" key="1"/>
<evidence type="ECO:0000305" key="2"/>